<evidence type="ECO:0000255" key="1">
    <source>
        <dbReference type="HAMAP-Rule" id="MF_03116"/>
    </source>
</evidence>
<evidence type="ECO:0000269" key="2">
    <source>
    </source>
</evidence>
<evidence type="ECO:0000269" key="3">
    <source>
    </source>
</evidence>
<evidence type="ECO:0000269" key="4">
    <source>
    </source>
</evidence>
<name>MTNB_YEAST</name>
<proteinExistence type="evidence at protein level"/>
<comment type="function">
    <text evidence="1 4">Catalyzes the dehydration of methylthioribulose-1-phosphate (MTRu-1-P) into 2,3-diketo-5-methylthiopentyl-1-phosphate (DK-MTP-1-P).</text>
</comment>
<comment type="catalytic activity">
    <reaction evidence="1">
        <text>5-(methylsulfanyl)-D-ribulose 1-phosphate = 5-methylsulfanyl-2,3-dioxopentyl phosphate + H2O</text>
        <dbReference type="Rhea" id="RHEA:15549"/>
        <dbReference type="ChEBI" id="CHEBI:15377"/>
        <dbReference type="ChEBI" id="CHEBI:58548"/>
        <dbReference type="ChEBI" id="CHEBI:58828"/>
        <dbReference type="EC" id="4.2.1.109"/>
    </reaction>
</comment>
<comment type="cofactor">
    <cofactor evidence="1">
        <name>Zn(2+)</name>
        <dbReference type="ChEBI" id="CHEBI:29105"/>
    </cofactor>
    <text evidence="1">Binds 1 zinc ion per subunit.</text>
</comment>
<comment type="pathway">
    <text evidence="1">Amino-acid biosynthesis; L-methionine biosynthesis via salvage pathway; L-methionine from S-methyl-5-thio-alpha-D-ribose 1-phosphate: step 2/6.</text>
</comment>
<comment type="subcellular location">
    <subcellularLocation>
        <location evidence="1 2">Cytoplasm</location>
    </subcellularLocation>
</comment>
<comment type="miscellaneous">
    <text evidence="3">Present with 952 molecules/cell in log phase SD medium.</text>
</comment>
<comment type="similarity">
    <text evidence="1">Belongs to the aldolase class II family. MtnB subfamily.</text>
</comment>
<accession>P47095</accession>
<accession>D6VWJ7</accession>
<reference key="1">
    <citation type="journal article" date="1995" name="Yeast">
        <title>The sequence of 24.3 kb from chromosome X reveals five complete open reading frames, all of which correspond to new genes, and a tandem insertion of a Ty1 transposon.</title>
        <authorList>
            <person name="Zagulski M."/>
            <person name="Babinska B."/>
            <person name="Gromadka R."/>
            <person name="Migdalski A."/>
            <person name="Rytka J."/>
            <person name="Sulicka J."/>
            <person name="Herbert C.J."/>
        </authorList>
    </citation>
    <scope>NUCLEOTIDE SEQUENCE [GENOMIC DNA]</scope>
</reference>
<reference key="2">
    <citation type="journal article" date="1996" name="EMBO J.">
        <title>Complete nucleotide sequence of Saccharomyces cerevisiae chromosome X.</title>
        <authorList>
            <person name="Galibert F."/>
            <person name="Alexandraki D."/>
            <person name="Baur A."/>
            <person name="Boles E."/>
            <person name="Chalwatzis N."/>
            <person name="Chuat J.-C."/>
            <person name="Coster F."/>
            <person name="Cziepluch C."/>
            <person name="de Haan M."/>
            <person name="Domdey H."/>
            <person name="Durand P."/>
            <person name="Entian K.-D."/>
            <person name="Gatius M."/>
            <person name="Goffeau A."/>
            <person name="Grivell L.A."/>
            <person name="Hennemann A."/>
            <person name="Herbert C.J."/>
            <person name="Heumann K."/>
            <person name="Hilger F."/>
            <person name="Hollenberg C.P."/>
            <person name="Huang M.-E."/>
            <person name="Jacq C."/>
            <person name="Jauniaux J.-C."/>
            <person name="Katsoulou C."/>
            <person name="Kirchrath L."/>
            <person name="Kleine K."/>
            <person name="Kordes E."/>
            <person name="Koetter P."/>
            <person name="Liebl S."/>
            <person name="Louis E.J."/>
            <person name="Manus V."/>
            <person name="Mewes H.-W."/>
            <person name="Miosga T."/>
            <person name="Obermaier B."/>
            <person name="Perea J."/>
            <person name="Pohl T.M."/>
            <person name="Portetelle D."/>
            <person name="Pujol A."/>
            <person name="Purnelle B."/>
            <person name="Ramezani Rad M."/>
            <person name="Rasmussen S.W."/>
            <person name="Rose M."/>
            <person name="Rossau R."/>
            <person name="Schaaff-Gerstenschlaeger I."/>
            <person name="Smits P.H.M."/>
            <person name="Scarcez T."/>
            <person name="Soriano N."/>
            <person name="To Van D."/>
            <person name="Tzermia M."/>
            <person name="Van Broekhoven A."/>
            <person name="Vandenbol M."/>
            <person name="Wedler H."/>
            <person name="von Wettstein D."/>
            <person name="Wambutt R."/>
            <person name="Zagulski M."/>
            <person name="Zollner A."/>
            <person name="Karpfinger-Hartl L."/>
        </authorList>
    </citation>
    <scope>NUCLEOTIDE SEQUENCE [LARGE SCALE GENOMIC DNA]</scope>
    <source>
        <strain>ATCC 204508 / S288c</strain>
    </source>
</reference>
<reference key="3">
    <citation type="journal article" date="2014" name="G3 (Bethesda)">
        <title>The reference genome sequence of Saccharomyces cerevisiae: Then and now.</title>
        <authorList>
            <person name="Engel S.R."/>
            <person name="Dietrich F.S."/>
            <person name="Fisk D.G."/>
            <person name="Binkley G."/>
            <person name="Balakrishnan R."/>
            <person name="Costanzo M.C."/>
            <person name="Dwight S.S."/>
            <person name="Hitz B.C."/>
            <person name="Karra K."/>
            <person name="Nash R.S."/>
            <person name="Weng S."/>
            <person name="Wong E.D."/>
            <person name="Lloyd P."/>
            <person name="Skrzypek M.S."/>
            <person name="Miyasato S.R."/>
            <person name="Simison M."/>
            <person name="Cherry J.M."/>
        </authorList>
    </citation>
    <scope>GENOME REANNOTATION</scope>
    <source>
        <strain>ATCC 204508 / S288c</strain>
    </source>
</reference>
<reference key="4">
    <citation type="journal article" date="2007" name="Genome Res.">
        <title>Approaching a complete repository of sequence-verified protein-encoding clones for Saccharomyces cerevisiae.</title>
        <authorList>
            <person name="Hu Y."/>
            <person name="Rolfs A."/>
            <person name="Bhullar B."/>
            <person name="Murthy T.V.S."/>
            <person name="Zhu C."/>
            <person name="Berger M.F."/>
            <person name="Camargo A.A."/>
            <person name="Kelley F."/>
            <person name="McCarron S."/>
            <person name="Jepson D."/>
            <person name="Richardson A."/>
            <person name="Raphael J."/>
            <person name="Moreira D."/>
            <person name="Taycher E."/>
            <person name="Zuo D."/>
            <person name="Mohr S."/>
            <person name="Kane M.F."/>
            <person name="Williamson J."/>
            <person name="Simpson A.J.G."/>
            <person name="Bulyk M.L."/>
            <person name="Harlow E."/>
            <person name="Marsischky G."/>
            <person name="Kolodner R.D."/>
            <person name="LaBaer J."/>
        </authorList>
    </citation>
    <scope>NUCLEOTIDE SEQUENCE [GENOMIC DNA]</scope>
    <source>
        <strain>ATCC 204508 / S288c</strain>
    </source>
</reference>
<reference key="5">
    <citation type="journal article" date="2003" name="Nature">
        <title>Global analysis of protein localization in budding yeast.</title>
        <authorList>
            <person name="Huh W.-K."/>
            <person name="Falvo J.V."/>
            <person name="Gerke L.C."/>
            <person name="Carroll A.S."/>
            <person name="Howson R.W."/>
            <person name="Weissman J.S."/>
            <person name="O'Shea E.K."/>
        </authorList>
    </citation>
    <scope>SUBCELLULAR LOCATION [LARGE SCALE ANALYSIS]</scope>
</reference>
<reference key="6">
    <citation type="journal article" date="2003" name="Nature">
        <title>Global analysis of protein expression in yeast.</title>
        <authorList>
            <person name="Ghaemmaghami S."/>
            <person name="Huh W.-K."/>
            <person name="Bower K."/>
            <person name="Howson R.W."/>
            <person name="Belle A."/>
            <person name="Dephoure N."/>
            <person name="O'Shea E.K."/>
            <person name="Weissman J.S."/>
        </authorList>
    </citation>
    <scope>LEVEL OF PROTEIN EXPRESSION [LARGE SCALE ANALYSIS]</scope>
</reference>
<reference key="7">
    <citation type="journal article" date="2008" name="FEBS J.">
        <title>A complete inventory of all enzymes in the eukaryotic methionine salvage pathway.</title>
        <authorList>
            <person name="Pirkov I."/>
            <person name="Norbeck J."/>
            <person name="Gustafsson L."/>
            <person name="Albers E."/>
        </authorList>
    </citation>
    <scope>FUNCTION</scope>
</reference>
<gene>
    <name evidence="1" type="primary">MDE1</name>
    <name type="ordered locus">YJR024C</name>
    <name type="ORF">J1545</name>
    <name type="ORF">YJR83.18</name>
</gene>
<organism>
    <name type="scientific">Saccharomyces cerevisiae (strain ATCC 204508 / S288c)</name>
    <name type="common">Baker's yeast</name>
    <dbReference type="NCBI Taxonomy" id="559292"/>
    <lineage>
        <taxon>Eukaryota</taxon>
        <taxon>Fungi</taxon>
        <taxon>Dikarya</taxon>
        <taxon>Ascomycota</taxon>
        <taxon>Saccharomycotina</taxon>
        <taxon>Saccharomycetes</taxon>
        <taxon>Saccharomycetales</taxon>
        <taxon>Saccharomycetaceae</taxon>
        <taxon>Saccharomyces</taxon>
    </lineage>
</organism>
<keyword id="KW-0028">Amino-acid biosynthesis</keyword>
<keyword id="KW-0963">Cytoplasm</keyword>
<keyword id="KW-0456">Lyase</keyword>
<keyword id="KW-0479">Metal-binding</keyword>
<keyword id="KW-0486">Methionine biosynthesis</keyword>
<keyword id="KW-1185">Reference proteome</keyword>
<keyword id="KW-0862">Zinc</keyword>
<dbReference type="EC" id="4.2.1.109" evidence="1"/>
<dbReference type="EMBL" id="Z49524">
    <property type="protein sequence ID" value="CAA89549.1"/>
    <property type="molecule type" value="Genomic_DNA"/>
</dbReference>
<dbReference type="EMBL" id="X87297">
    <property type="protein sequence ID" value="CAA60719.1"/>
    <property type="molecule type" value="Genomic_DNA"/>
</dbReference>
<dbReference type="EMBL" id="X87611">
    <property type="protein sequence ID" value="CAA60947.1"/>
    <property type="molecule type" value="Genomic_DNA"/>
</dbReference>
<dbReference type="EMBL" id="AY692565">
    <property type="protein sequence ID" value="AAT92584.1"/>
    <property type="molecule type" value="Genomic_DNA"/>
</dbReference>
<dbReference type="EMBL" id="BK006943">
    <property type="protein sequence ID" value="DAA08813.1"/>
    <property type="molecule type" value="Genomic_DNA"/>
</dbReference>
<dbReference type="PIR" id="S57042">
    <property type="entry name" value="S57042"/>
</dbReference>
<dbReference type="RefSeq" id="NP_012558.3">
    <property type="nucleotide sequence ID" value="NM_001181682.3"/>
</dbReference>
<dbReference type="SMR" id="P47095"/>
<dbReference type="BioGRID" id="33777">
    <property type="interactions" value="111"/>
</dbReference>
<dbReference type="DIP" id="DIP-1910N"/>
<dbReference type="FunCoup" id="P47095">
    <property type="interactions" value="291"/>
</dbReference>
<dbReference type="IntAct" id="P47095">
    <property type="interactions" value="80"/>
</dbReference>
<dbReference type="MINT" id="P47095"/>
<dbReference type="STRING" id="4932.YJR024C"/>
<dbReference type="iPTMnet" id="P47095"/>
<dbReference type="PaxDb" id="4932-YJR024C"/>
<dbReference type="PeptideAtlas" id="P47095"/>
<dbReference type="EnsemblFungi" id="YJR024C_mRNA">
    <property type="protein sequence ID" value="YJR024C"/>
    <property type="gene ID" value="YJR024C"/>
</dbReference>
<dbReference type="GeneID" id="853481"/>
<dbReference type="KEGG" id="sce:YJR024C"/>
<dbReference type="AGR" id="SGD:S000003785"/>
<dbReference type="SGD" id="S000003785">
    <property type="gene designation" value="MDE1"/>
</dbReference>
<dbReference type="VEuPathDB" id="FungiDB:YJR024C"/>
<dbReference type="eggNOG" id="KOG2631">
    <property type="taxonomic scope" value="Eukaryota"/>
</dbReference>
<dbReference type="GeneTree" id="ENSGT00390000001680"/>
<dbReference type="HOGENOM" id="CLU_006033_4_0_1"/>
<dbReference type="InParanoid" id="P47095"/>
<dbReference type="OMA" id="WFPGTSG"/>
<dbReference type="OrthoDB" id="191080at2759"/>
<dbReference type="BioCyc" id="YEAST:G3O-31663-MONOMER"/>
<dbReference type="BRENDA" id="4.2.1.109">
    <property type="organism ID" value="984"/>
</dbReference>
<dbReference type="UniPathway" id="UPA00904">
    <property type="reaction ID" value="UER00875"/>
</dbReference>
<dbReference type="BioGRID-ORCS" id="853481">
    <property type="hits" value="0 hits in 10 CRISPR screens"/>
</dbReference>
<dbReference type="ChiTaRS" id="MDE1">
    <property type="organism name" value="yeast"/>
</dbReference>
<dbReference type="PRO" id="PR:P47095"/>
<dbReference type="Proteomes" id="UP000002311">
    <property type="component" value="Chromosome X"/>
</dbReference>
<dbReference type="RNAct" id="P47095">
    <property type="molecule type" value="protein"/>
</dbReference>
<dbReference type="GO" id="GO:0005737">
    <property type="term" value="C:cytoplasm"/>
    <property type="evidence" value="ECO:0007005"/>
    <property type="project" value="SGD"/>
</dbReference>
<dbReference type="GO" id="GO:0005829">
    <property type="term" value="C:cytosol"/>
    <property type="evidence" value="ECO:0000304"/>
    <property type="project" value="Reactome"/>
</dbReference>
<dbReference type="GO" id="GO:0046570">
    <property type="term" value="F:methylthioribulose 1-phosphate dehydratase activity"/>
    <property type="evidence" value="ECO:0000315"/>
    <property type="project" value="SGD"/>
</dbReference>
<dbReference type="GO" id="GO:0008270">
    <property type="term" value="F:zinc ion binding"/>
    <property type="evidence" value="ECO:0007669"/>
    <property type="project" value="UniProtKB-UniRule"/>
</dbReference>
<dbReference type="GO" id="GO:0019509">
    <property type="term" value="P:L-methionine salvage from methylthioadenosine"/>
    <property type="evidence" value="ECO:0000315"/>
    <property type="project" value="SGD"/>
</dbReference>
<dbReference type="CDD" id="cd00398">
    <property type="entry name" value="Aldolase_II"/>
    <property type="match status" value="1"/>
</dbReference>
<dbReference type="FunFam" id="3.40.225.10:FF:000003">
    <property type="entry name" value="Methylthioribulose-1-phosphate dehydratase"/>
    <property type="match status" value="1"/>
</dbReference>
<dbReference type="Gene3D" id="3.40.225.10">
    <property type="entry name" value="Class II aldolase/adducin N-terminal domain"/>
    <property type="match status" value="1"/>
</dbReference>
<dbReference type="HAMAP" id="MF_03116">
    <property type="entry name" value="Salvage_MtnB_euk"/>
    <property type="match status" value="1"/>
</dbReference>
<dbReference type="InterPro" id="IPR001303">
    <property type="entry name" value="Aldolase_II/adducin_N"/>
</dbReference>
<dbReference type="InterPro" id="IPR036409">
    <property type="entry name" value="Aldolase_II/adducin_N_sf"/>
</dbReference>
<dbReference type="InterPro" id="IPR017714">
    <property type="entry name" value="MethylthioRu-1-P_deHdtase_MtnB"/>
</dbReference>
<dbReference type="InterPro" id="IPR027514">
    <property type="entry name" value="Salvage_MtnB_euk"/>
</dbReference>
<dbReference type="NCBIfam" id="TIGR03328">
    <property type="entry name" value="salvage_mtnB"/>
    <property type="match status" value="1"/>
</dbReference>
<dbReference type="PANTHER" id="PTHR10640">
    <property type="entry name" value="METHYLTHIORIBULOSE-1-PHOSPHATE DEHYDRATASE"/>
    <property type="match status" value="1"/>
</dbReference>
<dbReference type="PANTHER" id="PTHR10640:SF7">
    <property type="entry name" value="METHYLTHIORIBULOSE-1-PHOSPHATE DEHYDRATASE"/>
    <property type="match status" value="1"/>
</dbReference>
<dbReference type="Pfam" id="PF00596">
    <property type="entry name" value="Aldolase_II"/>
    <property type="match status" value="1"/>
</dbReference>
<dbReference type="SMART" id="SM01007">
    <property type="entry name" value="Aldolase_II"/>
    <property type="match status" value="1"/>
</dbReference>
<dbReference type="SUPFAM" id="SSF53639">
    <property type="entry name" value="AraD/HMP-PK domain-like"/>
    <property type="match status" value="1"/>
</dbReference>
<protein>
    <recommendedName>
        <fullName evidence="1">Methylthioribulose-1-phosphate dehydratase</fullName>
        <shortName evidence="1">MTRu-1-P dehydratase</shortName>
        <ecNumber evidence="1">4.2.1.109</ecNumber>
    </recommendedName>
</protein>
<feature type="chain" id="PRO_0000162938" description="Methylthioribulose-1-phosphate dehydratase">
    <location>
        <begin position="1"/>
        <end position="244"/>
    </location>
</feature>
<feature type="active site" description="Proton donor/acceptor" evidence="1">
    <location>
        <position position="130"/>
    </location>
</feature>
<feature type="binding site" evidence="1">
    <location>
        <position position="89"/>
    </location>
    <ligand>
        <name>substrate</name>
    </ligand>
</feature>
<feature type="binding site" evidence="1">
    <location>
        <position position="107"/>
    </location>
    <ligand>
        <name>Zn(2+)</name>
        <dbReference type="ChEBI" id="CHEBI:29105"/>
    </ligand>
</feature>
<feature type="binding site" evidence="1">
    <location>
        <position position="109"/>
    </location>
    <ligand>
        <name>Zn(2+)</name>
        <dbReference type="ChEBI" id="CHEBI:29105"/>
    </ligand>
</feature>
<feature type="binding site" evidence="1">
    <location>
        <position position="192"/>
    </location>
    <ligand>
        <name>Zn(2+)</name>
        <dbReference type="ChEBI" id="CHEBI:29105"/>
    </ligand>
</feature>
<sequence>MSSQDVLIHSDDPCHPANLICTLCKQFFHNNWCTGTGGGISIKDPNTNYYYLAPSGVQKEKMIPEDLFVMDAQTLEYLRSPKLYKPSACTPLFLACYQKKNAGAIIHTHSQNAVICSLLFGDEFRIANIEQIKAIPSGKVDPVTKKPMALSFFDTLKIPIIENMAHEDELIDDLHKTFKDYPDTCAVIVRRHGIFVWGPTIDKAKIFNEAIDYLMELAIKMYQMGIPPDCGIGEEKKHLKMASP</sequence>